<reference key="1">
    <citation type="journal article" date="2006" name="Science">
        <title>Genome of rice cluster I archaea -- the key methane producers in the rice rhizosphere.</title>
        <authorList>
            <person name="Erkel C."/>
            <person name="Kube M."/>
            <person name="Reinhardt R."/>
            <person name="Liesack W."/>
        </authorList>
    </citation>
    <scope>NUCLEOTIDE SEQUENCE [LARGE SCALE GENOMIC DNA]</scope>
    <source>
        <strain>DSM 22066 / NBRC 105507 / MRE50</strain>
    </source>
</reference>
<feature type="chain" id="PRO_1000021357" description="Shikimate dehydrogenase (NADP(+))">
    <location>
        <begin position="1"/>
        <end position="269"/>
    </location>
</feature>
<feature type="active site" description="Proton acceptor" evidence="1">
    <location>
        <position position="66"/>
    </location>
</feature>
<feature type="binding site" evidence="1">
    <location>
        <begin position="15"/>
        <end position="17"/>
    </location>
    <ligand>
        <name>shikimate</name>
        <dbReference type="ChEBI" id="CHEBI:36208"/>
    </ligand>
</feature>
<feature type="binding site" evidence="1">
    <location>
        <position position="62"/>
    </location>
    <ligand>
        <name>shikimate</name>
        <dbReference type="ChEBI" id="CHEBI:36208"/>
    </ligand>
</feature>
<feature type="binding site" evidence="1">
    <location>
        <position position="86"/>
    </location>
    <ligand>
        <name>shikimate</name>
        <dbReference type="ChEBI" id="CHEBI:36208"/>
    </ligand>
</feature>
<feature type="binding site" evidence="1">
    <location>
        <position position="99"/>
    </location>
    <ligand>
        <name>shikimate</name>
        <dbReference type="ChEBI" id="CHEBI:36208"/>
    </ligand>
</feature>
<feature type="binding site" evidence="1">
    <location>
        <begin position="123"/>
        <end position="127"/>
    </location>
    <ligand>
        <name>NADP(+)</name>
        <dbReference type="ChEBI" id="CHEBI:58349"/>
    </ligand>
</feature>
<feature type="binding site" evidence="1">
    <location>
        <begin position="146"/>
        <end position="151"/>
    </location>
    <ligand>
        <name>NADP(+)</name>
        <dbReference type="ChEBI" id="CHEBI:58349"/>
    </ligand>
</feature>
<feature type="binding site" evidence="1">
    <location>
        <position position="213"/>
    </location>
    <ligand>
        <name>NADP(+)</name>
        <dbReference type="ChEBI" id="CHEBI:58349"/>
    </ligand>
</feature>
<feature type="binding site" evidence="1">
    <location>
        <position position="215"/>
    </location>
    <ligand>
        <name>shikimate</name>
        <dbReference type="ChEBI" id="CHEBI:36208"/>
    </ligand>
</feature>
<feature type="binding site" evidence="1">
    <location>
        <position position="236"/>
    </location>
    <ligand>
        <name>NADP(+)</name>
        <dbReference type="ChEBI" id="CHEBI:58349"/>
    </ligand>
</feature>
<keyword id="KW-0028">Amino-acid biosynthesis</keyword>
<keyword id="KW-0057">Aromatic amino acid biosynthesis</keyword>
<keyword id="KW-0521">NADP</keyword>
<keyword id="KW-0560">Oxidoreductase</keyword>
<keyword id="KW-1185">Reference proteome</keyword>
<dbReference type="EC" id="1.1.1.25" evidence="1"/>
<dbReference type="EMBL" id="AM114193">
    <property type="protein sequence ID" value="CAJ36600.1"/>
    <property type="molecule type" value="Genomic_DNA"/>
</dbReference>
<dbReference type="RefSeq" id="WP_012035947.1">
    <property type="nucleotide sequence ID" value="NC_009464.1"/>
</dbReference>
<dbReference type="SMR" id="Q0W4U3"/>
<dbReference type="STRING" id="351160.RCIX1312"/>
<dbReference type="GeneID" id="5142693"/>
<dbReference type="KEGG" id="rci:RCIX1312"/>
<dbReference type="PATRIC" id="fig|351160.9.peg.1658"/>
<dbReference type="eggNOG" id="arCOG01033">
    <property type="taxonomic scope" value="Archaea"/>
</dbReference>
<dbReference type="OrthoDB" id="8744at2157"/>
<dbReference type="UniPathway" id="UPA00053">
    <property type="reaction ID" value="UER00087"/>
</dbReference>
<dbReference type="Proteomes" id="UP000000663">
    <property type="component" value="Chromosome"/>
</dbReference>
<dbReference type="GO" id="GO:0050661">
    <property type="term" value="F:NADP binding"/>
    <property type="evidence" value="ECO:0007669"/>
    <property type="project" value="InterPro"/>
</dbReference>
<dbReference type="GO" id="GO:0004764">
    <property type="term" value="F:shikimate 3-dehydrogenase (NADP+) activity"/>
    <property type="evidence" value="ECO:0007669"/>
    <property type="project" value="UniProtKB-UniRule"/>
</dbReference>
<dbReference type="GO" id="GO:0008652">
    <property type="term" value="P:amino acid biosynthetic process"/>
    <property type="evidence" value="ECO:0007669"/>
    <property type="project" value="UniProtKB-KW"/>
</dbReference>
<dbReference type="GO" id="GO:0009073">
    <property type="term" value="P:aromatic amino acid family biosynthetic process"/>
    <property type="evidence" value="ECO:0007669"/>
    <property type="project" value="UniProtKB-KW"/>
</dbReference>
<dbReference type="GO" id="GO:0009423">
    <property type="term" value="P:chorismate biosynthetic process"/>
    <property type="evidence" value="ECO:0007669"/>
    <property type="project" value="UniProtKB-UniRule"/>
</dbReference>
<dbReference type="GO" id="GO:0019632">
    <property type="term" value="P:shikimate metabolic process"/>
    <property type="evidence" value="ECO:0007669"/>
    <property type="project" value="InterPro"/>
</dbReference>
<dbReference type="CDD" id="cd01065">
    <property type="entry name" value="NAD_bind_Shikimate_DH"/>
    <property type="match status" value="1"/>
</dbReference>
<dbReference type="FunFam" id="3.40.50.720:FF:000086">
    <property type="entry name" value="Quinate/shikimate dehydrogenase"/>
    <property type="match status" value="1"/>
</dbReference>
<dbReference type="Gene3D" id="3.40.50.10860">
    <property type="entry name" value="Leucine Dehydrogenase, chain A, domain 1"/>
    <property type="match status" value="1"/>
</dbReference>
<dbReference type="Gene3D" id="3.40.50.720">
    <property type="entry name" value="NAD(P)-binding Rossmann-like Domain"/>
    <property type="match status" value="1"/>
</dbReference>
<dbReference type="HAMAP" id="MF_00222">
    <property type="entry name" value="Shikimate_DH_AroE"/>
    <property type="match status" value="1"/>
</dbReference>
<dbReference type="InterPro" id="IPR046346">
    <property type="entry name" value="Aminoacid_DH-like_N_sf"/>
</dbReference>
<dbReference type="InterPro" id="IPR036291">
    <property type="entry name" value="NAD(P)-bd_dom_sf"/>
</dbReference>
<dbReference type="InterPro" id="IPR041121">
    <property type="entry name" value="SDH_C"/>
</dbReference>
<dbReference type="InterPro" id="IPR011342">
    <property type="entry name" value="Shikimate_DH"/>
</dbReference>
<dbReference type="InterPro" id="IPR013708">
    <property type="entry name" value="Shikimate_DH-bd_N"/>
</dbReference>
<dbReference type="InterPro" id="IPR022893">
    <property type="entry name" value="Shikimate_DH_fam"/>
</dbReference>
<dbReference type="InterPro" id="IPR006151">
    <property type="entry name" value="Shikm_DH/Glu-tRNA_Rdtase"/>
</dbReference>
<dbReference type="NCBIfam" id="TIGR00507">
    <property type="entry name" value="aroE"/>
    <property type="match status" value="1"/>
</dbReference>
<dbReference type="NCBIfam" id="NF001319">
    <property type="entry name" value="PRK00258.3-3"/>
    <property type="match status" value="1"/>
</dbReference>
<dbReference type="PANTHER" id="PTHR21089:SF1">
    <property type="entry name" value="BIFUNCTIONAL 3-DEHYDROQUINATE DEHYDRATASE_SHIKIMATE DEHYDROGENASE, CHLOROPLASTIC"/>
    <property type="match status" value="1"/>
</dbReference>
<dbReference type="PANTHER" id="PTHR21089">
    <property type="entry name" value="SHIKIMATE DEHYDROGENASE"/>
    <property type="match status" value="1"/>
</dbReference>
<dbReference type="Pfam" id="PF18317">
    <property type="entry name" value="SDH_C"/>
    <property type="match status" value="1"/>
</dbReference>
<dbReference type="Pfam" id="PF01488">
    <property type="entry name" value="Shikimate_DH"/>
    <property type="match status" value="1"/>
</dbReference>
<dbReference type="Pfam" id="PF08501">
    <property type="entry name" value="Shikimate_dh_N"/>
    <property type="match status" value="1"/>
</dbReference>
<dbReference type="SUPFAM" id="SSF53223">
    <property type="entry name" value="Aminoacid dehydrogenase-like, N-terminal domain"/>
    <property type="match status" value="1"/>
</dbReference>
<dbReference type="SUPFAM" id="SSF51735">
    <property type="entry name" value="NAD(P)-binding Rossmann-fold domains"/>
    <property type="match status" value="1"/>
</dbReference>
<protein>
    <recommendedName>
        <fullName evidence="1">Shikimate dehydrogenase (NADP(+))</fullName>
        <shortName evidence="1">SDH</shortName>
        <ecNumber evidence="1">1.1.1.25</ecNumber>
    </recommendedName>
</protein>
<organism>
    <name type="scientific">Methanocella arvoryzae (strain DSM 22066 / NBRC 105507 / MRE50)</name>
    <dbReference type="NCBI Taxonomy" id="351160"/>
    <lineage>
        <taxon>Archaea</taxon>
        <taxon>Methanobacteriati</taxon>
        <taxon>Methanobacteriota</taxon>
        <taxon>Stenosarchaea group</taxon>
        <taxon>Methanomicrobia</taxon>
        <taxon>Methanocellales</taxon>
        <taxon>Methanocellaceae</taxon>
        <taxon>Methanocella</taxon>
    </lineage>
</organism>
<proteinExistence type="inferred from homology"/>
<accession>Q0W4U3</accession>
<name>AROE_METAR</name>
<comment type="function">
    <text evidence="1">Involved in the biosynthesis of the chorismate, which leads to the biosynthesis of aromatic amino acids. Catalyzes the reversible NADPH linked reduction of 3-dehydroshikimate (DHSA) to yield shikimate (SA).</text>
</comment>
<comment type="catalytic activity">
    <reaction evidence="1">
        <text>shikimate + NADP(+) = 3-dehydroshikimate + NADPH + H(+)</text>
        <dbReference type="Rhea" id="RHEA:17737"/>
        <dbReference type="ChEBI" id="CHEBI:15378"/>
        <dbReference type="ChEBI" id="CHEBI:16630"/>
        <dbReference type="ChEBI" id="CHEBI:36208"/>
        <dbReference type="ChEBI" id="CHEBI:57783"/>
        <dbReference type="ChEBI" id="CHEBI:58349"/>
        <dbReference type="EC" id="1.1.1.25"/>
    </reaction>
</comment>
<comment type="pathway">
    <text evidence="1">Metabolic intermediate biosynthesis; chorismate biosynthesis; chorismate from D-erythrose 4-phosphate and phosphoenolpyruvate: step 4/7.</text>
</comment>
<comment type="subunit">
    <text evidence="1">Homodimer.</text>
</comment>
<comment type="similarity">
    <text evidence="1">Belongs to the shikimate dehydrogenase family.</text>
</comment>
<evidence type="ECO:0000255" key="1">
    <source>
        <dbReference type="HAMAP-Rule" id="MF_00222"/>
    </source>
</evidence>
<gene>
    <name evidence="1" type="primary">aroE</name>
    <name type="ordered locus">UNCMA_16210</name>
    <name type="ORF">RCIX1312</name>
</gene>
<sequence length="269" mass="28869">MMTIYGVVGYPVEHSLSPVMHNAAFKALDMDCAYHKFEVKGEHLKDAILGARYLGFGGLNVTIPHKEAALRIMEPDRTALEIGAANTLDFKQMRAFNTDAAGAIDALRDGGVELENKGVLVLGAGGAARAVVYGLVKEGATVTIANRTTAKAADLAAYMRSFGSVFGTSLDSLGEKVRAVDIVINTTPIGMGWEDKPLVTRDMLDRSQAVFDLVYRPVETPLLREARAAGAKTIDGISMLARQGAKSFEIWTGVKPPVDVMERSARDAL</sequence>